<reference key="1">
    <citation type="journal article" date="1989" name="J. Mol. Biol.">
        <title>Control of gene expression in the P2-related temperate coliphage 186. VI. Sequence analysis of the early lytic region.</title>
        <authorList>
            <person name="Richardson H."/>
            <person name="Puspurs A."/>
            <person name="Egan J.B."/>
        </authorList>
    </citation>
    <scope>NUCLEOTIDE SEQUENCE [GENOMIC DNA]</scope>
</reference>
<reference key="2">
    <citation type="journal article" date="1990" name="J. Mol. Biol.">
        <title>DNA replication studies with coliphage 186. III. A single phage gene is required for phage 186 replication.</title>
        <authorList>
            <person name="Sivaprasad A.V."/>
            <person name="Jarvinen R."/>
            <person name="Puspurs A."/>
            <person name="Egan J.B."/>
        </authorList>
    </citation>
    <scope>NUCLEOTIDE SEQUENCE [GENOMIC DNA]</scope>
    <source>
        <strain>186CITSP</strain>
    </source>
</reference>
<sequence>MSRTIYLSTPSGAGDHLLESLFKEAKKEERKDRRLAVSIRLEDLAVHITNSDMTGKEAAELLRREATRFENESQELH</sequence>
<protein>
    <recommendedName>
        <fullName>Uncharacterized 8.8 kDa protein in GpA 5'region</fullName>
    </recommendedName>
</protein>
<dbReference type="EMBL" id="X15001">
    <property type="protein sequence ID" value="CAA33109.1"/>
    <property type="molecule type" value="Genomic_DNA"/>
</dbReference>
<dbReference type="EMBL" id="U32222">
    <property type="protein sequence ID" value="AAC34181.1"/>
    <property type="molecule type" value="Genomic_DNA"/>
</dbReference>
<dbReference type="PIR" id="S10627">
    <property type="entry name" value="S10627"/>
</dbReference>
<dbReference type="RefSeq" id="NP_052284.1">
    <property type="nucleotide sequence ID" value="NC_001317.1"/>
</dbReference>
<dbReference type="SMR" id="P21682"/>
<dbReference type="KEGG" id="vg:1262449"/>
<dbReference type="OrthoDB" id="38360at10239"/>
<dbReference type="Proteomes" id="UP000000369">
    <property type="component" value="Segment"/>
</dbReference>
<dbReference type="InterPro" id="IPR020126">
    <property type="entry name" value="DUF2732"/>
</dbReference>
<dbReference type="Pfam" id="PF10809">
    <property type="entry name" value="DUF2732"/>
    <property type="match status" value="1"/>
</dbReference>
<organism>
    <name type="scientific">Escherichia phage 186</name>
    <name type="common">Bacteriophage 186</name>
    <dbReference type="NCBI Taxonomy" id="29252"/>
    <lineage>
        <taxon>Viruses</taxon>
        <taxon>Duplodnaviria</taxon>
        <taxon>Heunggongvirae</taxon>
        <taxon>Uroviricota</taxon>
        <taxon>Caudoviricetes</taxon>
        <taxon>Peduoviridae</taxon>
        <taxon>Eganvirus</taxon>
    </lineage>
</organism>
<keyword id="KW-1185">Reference proteome</keyword>
<evidence type="ECO:0000305" key="1"/>
<accession>P21682</accession>
<name>CP79_BP186</name>
<feature type="chain" id="PRO_0000165301" description="Uncharacterized 8.8 kDa protein in GpA 5'region">
    <location>
        <begin position="1"/>
        <end position="77"/>
    </location>
</feature>
<feature type="sequence conflict" description="In Ref. 1; CAA33109." evidence="1" ref="1">
    <original>R</original>
    <variation>A</variation>
    <location>
        <position position="34"/>
    </location>
</feature>
<gene>
    <name type="primary">CP79</name>
</gene>
<proteinExistence type="predicted"/>
<organismHost>
    <name type="scientific">Escherichia coli</name>
    <dbReference type="NCBI Taxonomy" id="562"/>
</organismHost>